<keyword id="KW-0963">Cytoplasm</keyword>
<keyword id="KW-0342">GTP-binding</keyword>
<keyword id="KW-0436">Ligase</keyword>
<keyword id="KW-0460">Magnesium</keyword>
<keyword id="KW-0479">Metal-binding</keyword>
<keyword id="KW-0547">Nucleotide-binding</keyword>
<keyword id="KW-0658">Purine biosynthesis</keyword>
<keyword id="KW-1185">Reference proteome</keyword>
<name>PURA1_BOVIN</name>
<accession>A5PJR4</accession>
<dbReference type="EC" id="6.3.4.4" evidence="2"/>
<dbReference type="EMBL" id="BC142211">
    <property type="protein sequence ID" value="AAI42212.1"/>
    <property type="molecule type" value="mRNA"/>
</dbReference>
<dbReference type="RefSeq" id="NP_001092662.1">
    <property type="nucleotide sequence ID" value="NM_001099192.1"/>
</dbReference>
<dbReference type="SMR" id="A5PJR4"/>
<dbReference type="FunCoup" id="A5PJR4">
    <property type="interactions" value="957"/>
</dbReference>
<dbReference type="STRING" id="9913.ENSBTAP00000041803"/>
<dbReference type="PaxDb" id="9913-ENSBTAP00000041803"/>
<dbReference type="GeneID" id="784089"/>
<dbReference type="KEGG" id="bta:784089"/>
<dbReference type="CTD" id="122622"/>
<dbReference type="VEuPathDB" id="HostDB:ENSBTAG00000017616"/>
<dbReference type="eggNOG" id="KOG1355">
    <property type="taxonomic scope" value="Eukaryota"/>
</dbReference>
<dbReference type="HOGENOM" id="CLU_029848_3_0_1"/>
<dbReference type="InParanoid" id="A5PJR4"/>
<dbReference type="OMA" id="TKAYSSC"/>
<dbReference type="OrthoDB" id="10265645at2759"/>
<dbReference type="TreeFam" id="TF300486"/>
<dbReference type="Reactome" id="R-BTA-73817">
    <property type="pathway name" value="Purine ribonucleoside monophosphate biosynthesis"/>
</dbReference>
<dbReference type="UniPathway" id="UPA00075">
    <property type="reaction ID" value="UER00335"/>
</dbReference>
<dbReference type="Proteomes" id="UP000009136">
    <property type="component" value="Chromosome 21"/>
</dbReference>
<dbReference type="Bgee" id="ENSBTAG00000017616">
    <property type="expression patterns" value="Expressed in biceps femoris and 103 other cell types or tissues"/>
</dbReference>
<dbReference type="GO" id="GO:0005737">
    <property type="term" value="C:cytoplasm"/>
    <property type="evidence" value="ECO:0000318"/>
    <property type="project" value="GO_Central"/>
</dbReference>
<dbReference type="GO" id="GO:0004019">
    <property type="term" value="F:adenylosuccinate synthase activity"/>
    <property type="evidence" value="ECO:0000250"/>
    <property type="project" value="UniProtKB"/>
</dbReference>
<dbReference type="GO" id="GO:0005525">
    <property type="term" value="F:GTP binding"/>
    <property type="evidence" value="ECO:0007669"/>
    <property type="project" value="UniProtKB-UniRule"/>
</dbReference>
<dbReference type="GO" id="GO:0000287">
    <property type="term" value="F:magnesium ion binding"/>
    <property type="evidence" value="ECO:0007669"/>
    <property type="project" value="UniProtKB-UniRule"/>
</dbReference>
<dbReference type="GO" id="GO:0044208">
    <property type="term" value="P:'de novo' AMP biosynthetic process"/>
    <property type="evidence" value="ECO:0000318"/>
    <property type="project" value="GO_Central"/>
</dbReference>
<dbReference type="GO" id="GO:0046040">
    <property type="term" value="P:IMP metabolic process"/>
    <property type="evidence" value="ECO:0000318"/>
    <property type="project" value="GO_Central"/>
</dbReference>
<dbReference type="CDD" id="cd03108">
    <property type="entry name" value="AdSS"/>
    <property type="match status" value="1"/>
</dbReference>
<dbReference type="FunFam" id="3.90.170.10:FF:000001">
    <property type="entry name" value="Adenylosuccinate synthetase"/>
    <property type="match status" value="1"/>
</dbReference>
<dbReference type="FunFam" id="1.10.300.10:FF:000002">
    <property type="entry name" value="Adenylosuccinate synthetase, chloroplastic"/>
    <property type="match status" value="1"/>
</dbReference>
<dbReference type="Gene3D" id="3.40.440.10">
    <property type="entry name" value="Adenylosuccinate Synthetase, subunit A, domain 1"/>
    <property type="match status" value="1"/>
</dbReference>
<dbReference type="Gene3D" id="1.10.300.10">
    <property type="entry name" value="Adenylosuccinate Synthetase, subunit A, domain 2"/>
    <property type="match status" value="1"/>
</dbReference>
<dbReference type="Gene3D" id="3.90.170.10">
    <property type="entry name" value="Adenylosuccinate Synthetase, subunit A, domain 3"/>
    <property type="match status" value="1"/>
</dbReference>
<dbReference type="HAMAP" id="MF_00011">
    <property type="entry name" value="Adenylosucc_synth"/>
    <property type="match status" value="1"/>
</dbReference>
<dbReference type="HAMAP" id="MF_03126">
    <property type="entry name" value="Adenylosucc_synth_vert_basic"/>
    <property type="match status" value="1"/>
</dbReference>
<dbReference type="InterPro" id="IPR018220">
    <property type="entry name" value="Adenylosuccin_syn_GTP-bd"/>
</dbReference>
<dbReference type="InterPro" id="IPR033128">
    <property type="entry name" value="Adenylosuccin_syn_Lys_AS"/>
</dbReference>
<dbReference type="InterPro" id="IPR042109">
    <property type="entry name" value="Adenylosuccinate_synth_dom1"/>
</dbReference>
<dbReference type="InterPro" id="IPR042110">
    <property type="entry name" value="Adenylosuccinate_synth_dom2"/>
</dbReference>
<dbReference type="InterPro" id="IPR042111">
    <property type="entry name" value="Adenylosuccinate_synth_dom3"/>
</dbReference>
<dbReference type="InterPro" id="IPR001114">
    <property type="entry name" value="Adenylosuccinate_synthetase"/>
</dbReference>
<dbReference type="InterPro" id="IPR027509">
    <property type="entry name" value="AdSS_1_vert"/>
</dbReference>
<dbReference type="InterPro" id="IPR027417">
    <property type="entry name" value="P-loop_NTPase"/>
</dbReference>
<dbReference type="NCBIfam" id="NF002223">
    <property type="entry name" value="PRK01117.1"/>
    <property type="match status" value="1"/>
</dbReference>
<dbReference type="NCBIfam" id="TIGR00184">
    <property type="entry name" value="purA"/>
    <property type="match status" value="1"/>
</dbReference>
<dbReference type="PANTHER" id="PTHR11846">
    <property type="entry name" value="ADENYLOSUCCINATE SYNTHETASE"/>
    <property type="match status" value="1"/>
</dbReference>
<dbReference type="PANTHER" id="PTHR11846:SF2">
    <property type="entry name" value="ADENYLOSUCCINATE SYNTHETASE ISOZYME 1"/>
    <property type="match status" value="1"/>
</dbReference>
<dbReference type="Pfam" id="PF00709">
    <property type="entry name" value="Adenylsucc_synt"/>
    <property type="match status" value="1"/>
</dbReference>
<dbReference type="SMART" id="SM00788">
    <property type="entry name" value="Adenylsucc_synt"/>
    <property type="match status" value="1"/>
</dbReference>
<dbReference type="SUPFAM" id="SSF52540">
    <property type="entry name" value="P-loop containing nucleoside triphosphate hydrolases"/>
    <property type="match status" value="1"/>
</dbReference>
<dbReference type="PROSITE" id="PS01266">
    <property type="entry name" value="ADENYLOSUCCIN_SYN_1"/>
    <property type="match status" value="1"/>
</dbReference>
<dbReference type="PROSITE" id="PS00513">
    <property type="entry name" value="ADENYLOSUCCIN_SYN_2"/>
    <property type="match status" value="1"/>
</dbReference>
<gene>
    <name evidence="2" type="primary">ADSS1</name>
    <name evidence="2" type="synonym">ADSSL1</name>
</gene>
<evidence type="ECO:0000250" key="1">
    <source>
        <dbReference type="UniProtKB" id="Q8N142"/>
    </source>
</evidence>
<evidence type="ECO:0000255" key="2">
    <source>
        <dbReference type="HAMAP-Rule" id="MF_03126"/>
    </source>
</evidence>
<evidence type="ECO:0000256" key="3">
    <source>
        <dbReference type="SAM" id="MobiDB-lite"/>
    </source>
</evidence>
<sequence>MSGTRASNDRPPSAGGVKRGRLQHEAATTGSRVTVVLGAQWGDEGKGKVVDLLATDADVVSRCQGGNNAGHTVVVDGKEYDFHLLPSGIINPKAVSFIGNGVVVHLPGLFEEAEKNEKKGLKDWEKRLVISDRAHLVFDFHQAVDGLQEVQRQAQEGKNIGTTRKGIGPAYSSKAARTGLRICDLLSDFDEFSSRFKNLARQHQSMFPSLEVDVEGQLKRLKGFAERIRPMVRDGVYFMYEALHGPPKKILVEGANAALLDIDFGTYPFVTSSNCTVGGVCTGLGIPPQNIGEVYGVVKAYTTRVGIGAFPTEQINEIGDLLQSRGHEWGVTTGRKRRCGWLDLMILRYAHMVNGFTALALTKLDILDALDEIKVGVAYKLGGKRIPYFPANQEILQKVEVEYETLPGWKADTTGARKWEDLPPQAQSYIRFVENHVGVAVKWVGVGKSRDSMIQLF</sequence>
<proteinExistence type="evidence at transcript level"/>
<reference key="1">
    <citation type="submission" date="2007-06" db="EMBL/GenBank/DDBJ databases">
        <authorList>
            <consortium name="NIH - Mammalian Gene Collection (MGC) project"/>
        </authorList>
    </citation>
    <scope>NUCLEOTIDE SEQUENCE [LARGE SCALE MRNA]</scope>
    <source>
        <strain>Hereford</strain>
        <tissue>Fetal muscle</tissue>
    </source>
</reference>
<organism>
    <name type="scientific">Bos taurus</name>
    <name type="common">Bovine</name>
    <dbReference type="NCBI Taxonomy" id="9913"/>
    <lineage>
        <taxon>Eukaryota</taxon>
        <taxon>Metazoa</taxon>
        <taxon>Chordata</taxon>
        <taxon>Craniata</taxon>
        <taxon>Vertebrata</taxon>
        <taxon>Euteleostomi</taxon>
        <taxon>Mammalia</taxon>
        <taxon>Eutheria</taxon>
        <taxon>Laurasiatheria</taxon>
        <taxon>Artiodactyla</taxon>
        <taxon>Ruminantia</taxon>
        <taxon>Pecora</taxon>
        <taxon>Bovidae</taxon>
        <taxon>Bovinae</taxon>
        <taxon>Bos</taxon>
    </lineage>
</organism>
<protein>
    <recommendedName>
        <fullName evidence="2">Adenylosuccinate synthetase isozyme 1</fullName>
        <shortName evidence="2">AMPSase 1</shortName>
        <shortName evidence="2">AdSS 1</shortName>
        <ecNumber evidence="2">6.3.4.4</ecNumber>
    </recommendedName>
    <alternativeName>
        <fullName evidence="2">Adenylosuccinate synthetase, basic isozyme</fullName>
    </alternativeName>
    <alternativeName>
        <fullName evidence="2">Adenylosuccinate synthetase, muscle isozyme</fullName>
        <shortName evidence="2">M-type adenylosuccinate synthetase</shortName>
    </alternativeName>
    <alternativeName>
        <fullName evidence="2">IMP--aspartate ligase 1</fullName>
    </alternativeName>
</protein>
<feature type="chain" id="PRO_0000321960" description="Adenylosuccinate synthetase isozyme 1">
    <location>
        <begin position="1"/>
        <end position="457"/>
    </location>
</feature>
<feature type="region of interest" description="Disordered" evidence="3">
    <location>
        <begin position="1"/>
        <end position="25"/>
    </location>
</feature>
<feature type="active site" description="Proton acceptor" evidence="2">
    <location>
        <position position="43"/>
    </location>
</feature>
<feature type="active site" description="Proton donor" evidence="2">
    <location>
        <position position="71"/>
    </location>
</feature>
<feature type="binding site" evidence="2">
    <location>
        <begin position="42"/>
        <end position="48"/>
    </location>
    <ligand>
        <name>GTP</name>
        <dbReference type="ChEBI" id="CHEBI:37565"/>
    </ligand>
</feature>
<feature type="binding site" description="in other chain" evidence="2">
    <location>
        <begin position="43"/>
        <end position="46"/>
    </location>
    <ligand>
        <name>IMP</name>
        <dbReference type="ChEBI" id="CHEBI:58053"/>
        <note>ligand shared between dimeric partners</note>
    </ligand>
</feature>
<feature type="binding site" evidence="2">
    <location>
        <position position="43"/>
    </location>
    <ligand>
        <name>Mg(2+)</name>
        <dbReference type="ChEBI" id="CHEBI:18420"/>
    </ligand>
</feature>
<feature type="binding site" evidence="2">
    <location>
        <position position="43"/>
    </location>
    <ligand>
        <name>substrate</name>
    </ligand>
</feature>
<feature type="binding site" description="in other chain" evidence="2">
    <location>
        <begin position="68"/>
        <end position="71"/>
    </location>
    <ligand>
        <name>IMP</name>
        <dbReference type="ChEBI" id="CHEBI:58053"/>
        <note>ligand shared between dimeric partners</note>
    </ligand>
</feature>
<feature type="binding site" evidence="2">
    <location>
        <begin position="70"/>
        <end position="72"/>
    </location>
    <ligand>
        <name>GTP</name>
        <dbReference type="ChEBI" id="CHEBI:37565"/>
    </ligand>
</feature>
<feature type="binding site" evidence="2">
    <location>
        <position position="70"/>
    </location>
    <ligand>
        <name>Mg(2+)</name>
        <dbReference type="ChEBI" id="CHEBI:18420"/>
    </ligand>
</feature>
<feature type="binding site" description="in other chain" evidence="2">
    <location>
        <position position="163"/>
    </location>
    <ligand>
        <name>IMP</name>
        <dbReference type="ChEBI" id="CHEBI:58053"/>
        <note>ligand shared between dimeric partners</note>
    </ligand>
</feature>
<feature type="binding site" evidence="2">
    <location>
        <position position="177"/>
    </location>
    <ligand>
        <name>IMP</name>
        <dbReference type="ChEBI" id="CHEBI:58053"/>
        <note>ligand shared between dimeric partners</note>
    </ligand>
</feature>
<feature type="binding site" description="in other chain" evidence="2">
    <location>
        <position position="256"/>
    </location>
    <ligand>
        <name>IMP</name>
        <dbReference type="ChEBI" id="CHEBI:58053"/>
        <note>ligand shared between dimeric partners</note>
    </ligand>
</feature>
<feature type="binding site" description="in other chain" evidence="2">
    <location>
        <position position="271"/>
    </location>
    <ligand>
        <name>IMP</name>
        <dbReference type="ChEBI" id="CHEBI:58053"/>
        <note>ligand shared between dimeric partners</note>
    </ligand>
</feature>
<feature type="binding site" evidence="2">
    <location>
        <begin position="331"/>
        <end position="337"/>
    </location>
    <ligand>
        <name>substrate</name>
    </ligand>
</feature>
<feature type="binding site" description="in other chain" evidence="2">
    <location>
        <position position="335"/>
    </location>
    <ligand>
        <name>IMP</name>
        <dbReference type="ChEBI" id="CHEBI:58053"/>
        <note>ligand shared between dimeric partners</note>
    </ligand>
</feature>
<feature type="binding site" evidence="2">
    <location>
        <position position="337"/>
    </location>
    <ligand>
        <name>GTP</name>
        <dbReference type="ChEBI" id="CHEBI:37565"/>
    </ligand>
</feature>
<feature type="binding site" evidence="2">
    <location>
        <begin position="363"/>
        <end position="365"/>
    </location>
    <ligand>
        <name>GTP</name>
        <dbReference type="ChEBI" id="CHEBI:37565"/>
    </ligand>
</feature>
<feature type="binding site" evidence="2">
    <location>
        <begin position="445"/>
        <end position="448"/>
    </location>
    <ligand>
        <name>GTP</name>
        <dbReference type="ChEBI" id="CHEBI:37565"/>
    </ligand>
</feature>
<comment type="function">
    <text evidence="1">Component of the purine nucleotide cycle (PNC), which interconverts IMP and AMP to regulate the nucleotide levels in various tissues, and which contributes to glycolysis and ammoniagenesis. Catalyzes the first committed step in the biosynthesis of AMP from IMP.</text>
</comment>
<comment type="catalytic activity">
    <reaction evidence="2">
        <text>IMP + L-aspartate + GTP = N(6)-(1,2-dicarboxyethyl)-AMP + GDP + phosphate + 2 H(+)</text>
        <dbReference type="Rhea" id="RHEA:15753"/>
        <dbReference type="ChEBI" id="CHEBI:15378"/>
        <dbReference type="ChEBI" id="CHEBI:29991"/>
        <dbReference type="ChEBI" id="CHEBI:37565"/>
        <dbReference type="ChEBI" id="CHEBI:43474"/>
        <dbReference type="ChEBI" id="CHEBI:57567"/>
        <dbReference type="ChEBI" id="CHEBI:58053"/>
        <dbReference type="ChEBI" id="CHEBI:58189"/>
        <dbReference type="EC" id="6.3.4.4"/>
    </reaction>
</comment>
<comment type="cofactor">
    <cofactor evidence="2">
        <name>Mg(2+)</name>
        <dbReference type="ChEBI" id="CHEBI:18420"/>
    </cofactor>
    <text evidence="2">Binds 1 Mg(2+) ion per subunit.</text>
</comment>
<comment type="pathway">
    <text evidence="2">Purine metabolism; AMP biosynthesis via de novo pathway; AMP from IMP: step 1/2.</text>
</comment>
<comment type="subunit">
    <text evidence="2">Homodimer.</text>
</comment>
<comment type="subcellular location">
    <subcellularLocation>
        <location evidence="2">Cytoplasm</location>
    </subcellularLocation>
</comment>
<comment type="similarity">
    <text evidence="2">Belongs to the adenylosuccinate synthetase family.</text>
</comment>